<comment type="function">
    <text evidence="1">Packages the positive strand viral genome RNA into a helical ribonucleocapsid (RNP) and plays a fundamental role during virion assembly through its interactions with the viral genome and membrane protein M. Plays an important role in enhancing the efficiency of subgenomic viral RNA transcription as well as viral replication.</text>
</comment>
<comment type="subunit">
    <text evidence="1">Homooligomer. Both monomeric and oligomeric forms interact with RNA. Interacts with protein M. Interacts with NSP3; this interaction serves to tether the genome to the newly translated replicase-transcriptase complex at a very early stage of infection.</text>
</comment>
<comment type="subcellular location">
    <subcellularLocation>
        <location evidence="1">Virion</location>
    </subcellularLocation>
    <subcellularLocation>
        <location evidence="1">Host endoplasmic reticulum-Golgi intermediate compartment</location>
    </subcellularLocation>
    <subcellularLocation>
        <location evidence="1">Host Golgi apparatus</location>
    </subcellularLocation>
    <text evidence="1">Located inside the virion, complexed with the viral RNA. Probably associates with ER-derived membranes where it participates in viral RNA synthesis and virus budding.</text>
</comment>
<comment type="PTM">
    <text evidence="1">ADP-ribosylated. The ADP-ribosylation is retained in the virion during infection.</text>
</comment>
<comment type="PTM">
    <text evidence="1">Phosphorylated on serine and threonine residues.</text>
</comment>
<comment type="similarity">
    <text evidence="1">Belongs to the gammacoronavirus nucleocapsid protein family.</text>
</comment>
<proteinExistence type="inferred from homology"/>
<protein>
    <recommendedName>
        <fullName evidence="1">Nucleoprotein</fullName>
    </recommendedName>
    <alternativeName>
        <fullName evidence="1">Nucleocapsid protein</fullName>
        <shortName evidence="1">NC</shortName>
        <shortName evidence="1">Protein N</shortName>
    </alternativeName>
</protein>
<evidence type="ECO:0000255" key="1">
    <source>
        <dbReference type="HAMAP-Rule" id="MF_04097"/>
    </source>
</evidence>
<evidence type="ECO:0000255" key="2">
    <source>
        <dbReference type="PROSITE-ProRule" id="PRU01276"/>
    </source>
</evidence>
<evidence type="ECO:0000255" key="3">
    <source>
        <dbReference type="PROSITE-ProRule" id="PRU01277"/>
    </source>
</evidence>
<evidence type="ECO:0000256" key="4">
    <source>
        <dbReference type="SAM" id="MobiDB-lite"/>
    </source>
</evidence>
<accession>P12648</accession>
<dbReference type="EMBL" id="M21515">
    <property type="protein sequence ID" value="AAA66583.1"/>
    <property type="molecule type" value="Genomic_RNA"/>
</dbReference>
<dbReference type="PIR" id="D29249">
    <property type="entry name" value="VHIHAI"/>
</dbReference>
<dbReference type="SMR" id="P12648"/>
<dbReference type="GO" id="GO:0044172">
    <property type="term" value="C:host cell endoplasmic reticulum-Golgi intermediate compartment"/>
    <property type="evidence" value="ECO:0007669"/>
    <property type="project" value="UniProtKB-SubCell"/>
</dbReference>
<dbReference type="GO" id="GO:0044177">
    <property type="term" value="C:host cell Golgi apparatus"/>
    <property type="evidence" value="ECO:0007669"/>
    <property type="project" value="UniProtKB-SubCell"/>
</dbReference>
<dbReference type="GO" id="GO:1990904">
    <property type="term" value="C:ribonucleoprotein complex"/>
    <property type="evidence" value="ECO:0007669"/>
    <property type="project" value="UniProtKB-KW"/>
</dbReference>
<dbReference type="GO" id="GO:0019013">
    <property type="term" value="C:viral nucleocapsid"/>
    <property type="evidence" value="ECO:0007669"/>
    <property type="project" value="UniProtKB-UniRule"/>
</dbReference>
<dbReference type="GO" id="GO:0003723">
    <property type="term" value="F:RNA binding"/>
    <property type="evidence" value="ECO:0007669"/>
    <property type="project" value="UniProtKB-UniRule"/>
</dbReference>
<dbReference type="CDD" id="cd21595">
    <property type="entry name" value="CoV_N-CTD"/>
    <property type="match status" value="1"/>
</dbReference>
<dbReference type="CDD" id="cd21554">
    <property type="entry name" value="CoV_N-NTD"/>
    <property type="match status" value="1"/>
</dbReference>
<dbReference type="HAMAP" id="MF_04097">
    <property type="entry name" value="GAMMA_CORONA_NCAP"/>
    <property type="match status" value="1"/>
</dbReference>
<dbReference type="InterPro" id="IPR044344">
    <property type="entry name" value="N_prot_C_CoV"/>
</dbReference>
<dbReference type="InterPro" id="IPR044345">
    <property type="entry name" value="N_prot_N_CoV"/>
</dbReference>
<dbReference type="InterPro" id="IPR042547">
    <property type="entry name" value="NCAP_gCoV"/>
</dbReference>
<dbReference type="InterPro" id="IPR001218">
    <property type="entry name" value="Nucleocap_CoV"/>
</dbReference>
<dbReference type="InterPro" id="IPR037179">
    <property type="entry name" value="Nucleocapsid_C"/>
</dbReference>
<dbReference type="InterPro" id="IPR037195">
    <property type="entry name" value="Nucleocapsid_N"/>
</dbReference>
<dbReference type="Pfam" id="PF00937">
    <property type="entry name" value="CoV_nucleocap"/>
    <property type="match status" value="1"/>
</dbReference>
<dbReference type="PIRSF" id="PIRSF003888">
    <property type="entry name" value="Corona_nucleocap"/>
    <property type="match status" value="1"/>
</dbReference>
<dbReference type="SUPFAM" id="SSF110304">
    <property type="entry name" value="Coronavirus RNA-binding domain"/>
    <property type="match status" value="1"/>
</dbReference>
<dbReference type="SUPFAM" id="SSF103068">
    <property type="entry name" value="Nucleocapsid protein dimerization domain"/>
    <property type="match status" value="1"/>
</dbReference>
<dbReference type="PROSITE" id="PS51929">
    <property type="entry name" value="COV_N_CTD"/>
    <property type="match status" value="1"/>
</dbReference>
<dbReference type="PROSITE" id="PS51928">
    <property type="entry name" value="COV_N_NTD"/>
    <property type="match status" value="1"/>
</dbReference>
<feature type="chain" id="PRO_0000105984" description="Nucleoprotein">
    <location>
        <begin position="1"/>
        <end position="409"/>
    </location>
</feature>
<feature type="domain" description="CoV N NTD" evidence="2">
    <location>
        <begin position="31"/>
        <end position="156"/>
    </location>
</feature>
<feature type="domain" description="CoV N CTD" evidence="3">
    <location>
        <begin position="215"/>
        <end position="331"/>
    </location>
</feature>
<feature type="region of interest" description="Disordered" evidence="4">
    <location>
        <begin position="1"/>
        <end position="32"/>
    </location>
</feature>
<feature type="region of interest" description="RNA-binding" evidence="1">
    <location>
        <begin position="29"/>
        <end position="160"/>
    </location>
</feature>
<feature type="region of interest" description="Disordered" evidence="4">
    <location>
        <begin position="46"/>
        <end position="69"/>
    </location>
</feature>
<feature type="region of interest" description="Disordered" evidence="4">
    <location>
        <begin position="120"/>
        <end position="193"/>
    </location>
</feature>
<feature type="region of interest" description="Dimerization" evidence="1">
    <location>
        <begin position="226"/>
        <end position="333"/>
    </location>
</feature>
<feature type="region of interest" description="Disordered" evidence="4">
    <location>
        <begin position="238"/>
        <end position="259"/>
    </location>
</feature>
<feature type="region of interest" description="Disordered" evidence="4">
    <location>
        <begin position="327"/>
        <end position="409"/>
    </location>
</feature>
<feature type="compositionally biased region" description="Low complexity" evidence="4">
    <location>
        <begin position="15"/>
        <end position="31"/>
    </location>
</feature>
<feature type="compositionally biased region" description="Low complexity" evidence="4">
    <location>
        <begin position="162"/>
        <end position="179"/>
    </location>
</feature>
<feature type="compositionally biased region" description="Basic and acidic residues" evidence="4">
    <location>
        <begin position="180"/>
        <end position="192"/>
    </location>
</feature>
<feature type="compositionally biased region" description="Basic and acidic residues" evidence="4">
    <location>
        <begin position="247"/>
        <end position="259"/>
    </location>
</feature>
<feature type="compositionally biased region" description="Low complexity" evidence="4">
    <location>
        <begin position="341"/>
        <end position="354"/>
    </location>
</feature>
<feature type="compositionally biased region" description="Basic residues" evidence="4">
    <location>
        <begin position="358"/>
        <end position="367"/>
    </location>
</feature>
<feature type="compositionally biased region" description="Basic and acidic residues" evidence="4">
    <location>
        <begin position="368"/>
        <end position="384"/>
    </location>
</feature>
<feature type="modified residue" description="Phosphoserine; by host" evidence="1">
    <location>
        <position position="190"/>
    </location>
</feature>
<feature type="modified residue" description="Phosphothreonine; by host" evidence="1">
    <location>
        <position position="378"/>
    </location>
</feature>
<feature type="modified residue" description="Phosphoserine; by host" evidence="1">
    <location>
        <position position="379"/>
    </location>
</feature>
<feature type="disulfide bond" evidence="1">
    <location>
        <begin position="320"/>
        <end position="323"/>
    </location>
</feature>
<sequence>MASGKATGKTDAPAPVIKLGGPKPPKVGSSGNASWFQAIKAKKLNSPPLKFEGSGVPDNENLKTSQQHGYWRRQARFKPSKGGRKPVPDAWYFYYTGTGPAADLNWGDSQDGIVWVAAKGADTKSRSNQGTRDPDKFDQYPLRFSDGGPDGNFRWDFIPLNRGRSGKSTAASSAASSRAPSREGSRGRRSGAEDDLIARAAKIIQDQQKKGARITKAKADEMAHRRYCKRTIPPGYKVDQVFGPRTKGKEGNFGDDKMNEEGIKDGRVTAMLNLVPSSHACLFGSRVTPKLQPDGLHLKFEFTTVVSRNDPQFDNYVKICDQCVDGVGTRPKDDEPKPKSRSSSRPATRTSSPAPRQPRPKKEKKTKKQDDEVDKALTSDEERNNAQLEFDDEPKVINWGDSALGENEL</sequence>
<organismHost>
    <name type="scientific">Gallus gallus</name>
    <name type="common">Chicken</name>
    <dbReference type="NCBI Taxonomy" id="9031"/>
</organismHost>
<organism>
    <name type="scientific">Avian infectious bronchitis virus (strain KB8523)</name>
    <name type="common">IBV</name>
    <dbReference type="NCBI Taxonomy" id="11126"/>
    <lineage>
        <taxon>Viruses</taxon>
        <taxon>Riboviria</taxon>
        <taxon>Orthornavirae</taxon>
        <taxon>Pisuviricota</taxon>
        <taxon>Pisoniviricetes</taxon>
        <taxon>Nidovirales</taxon>
        <taxon>Cornidovirineae</taxon>
        <taxon>Coronaviridae</taxon>
        <taxon>Orthocoronavirinae</taxon>
        <taxon>Gammacoronavirus</taxon>
        <taxon>Igacovirus</taxon>
        <taxon>Avian coronavirus</taxon>
    </lineage>
</organism>
<keyword id="KW-0013">ADP-ribosylation</keyword>
<keyword id="KW-1015">Disulfide bond</keyword>
<keyword id="KW-1040">Host Golgi apparatus</keyword>
<keyword id="KW-0597">Phosphoprotein</keyword>
<keyword id="KW-0687">Ribonucleoprotein</keyword>
<keyword id="KW-0694">RNA-binding</keyword>
<keyword id="KW-0804">Transcription</keyword>
<keyword id="KW-0805">Transcription regulation</keyword>
<keyword id="KW-0543">Viral nucleoprotein</keyword>
<keyword id="KW-0946">Virion</keyword>
<reference key="1">
    <citation type="journal article" date="1988" name="Virology">
        <title>Cloning and sequencing of genes encoding structural proteins of avian infectious bronchitis virus.</title>
        <authorList>
            <person name="Sutou S."/>
            <person name="Sato S."/>
            <person name="Okabe T."/>
            <person name="Nakai M."/>
            <person name="Sasaki N."/>
        </authorList>
    </citation>
    <scope>NUCLEOTIDE SEQUENCE [GENOMIC RNA]</scope>
</reference>
<gene>
    <name evidence="1" type="primary">N</name>
    <name type="ORF">6</name>
</gene>
<name>NCAP_IBVK</name>